<accession>A1DI57</accession>
<gene>
    <name type="primary">tpc1</name>
    <name type="ORF">NFIA_090220</name>
</gene>
<dbReference type="EMBL" id="DS027696">
    <property type="protein sequence ID" value="EAW19064.1"/>
    <property type="molecule type" value="Genomic_DNA"/>
</dbReference>
<dbReference type="RefSeq" id="XP_001260961.1">
    <property type="nucleotide sequence ID" value="XM_001260960.1"/>
</dbReference>
<dbReference type="SMR" id="A1DI57"/>
<dbReference type="STRING" id="331117.A1DI57"/>
<dbReference type="EnsemblFungi" id="EAW19064">
    <property type="protein sequence ID" value="EAW19064"/>
    <property type="gene ID" value="NFIA_090220"/>
</dbReference>
<dbReference type="GeneID" id="4587519"/>
<dbReference type="KEGG" id="nfi:NFIA_090220"/>
<dbReference type="VEuPathDB" id="FungiDB:NFIA_090220"/>
<dbReference type="eggNOG" id="KOG0752">
    <property type="taxonomic scope" value="Eukaryota"/>
</dbReference>
<dbReference type="HOGENOM" id="CLU_015166_10_3_1"/>
<dbReference type="OMA" id="MYVCYGA"/>
<dbReference type="OrthoDB" id="18574at2759"/>
<dbReference type="Proteomes" id="UP000006702">
    <property type="component" value="Unassembled WGS sequence"/>
</dbReference>
<dbReference type="GO" id="GO:0005743">
    <property type="term" value="C:mitochondrial inner membrane"/>
    <property type="evidence" value="ECO:0007669"/>
    <property type="project" value="UniProtKB-SubCell"/>
</dbReference>
<dbReference type="GO" id="GO:0022857">
    <property type="term" value="F:transmembrane transporter activity"/>
    <property type="evidence" value="ECO:0007669"/>
    <property type="project" value="TreeGrafter"/>
</dbReference>
<dbReference type="FunFam" id="1.50.40.10:FF:000011">
    <property type="entry name" value="Mitochondrial thiamine pyrophosphate carrier 1"/>
    <property type="match status" value="1"/>
</dbReference>
<dbReference type="Gene3D" id="1.50.40.10">
    <property type="entry name" value="Mitochondrial carrier domain"/>
    <property type="match status" value="1"/>
</dbReference>
<dbReference type="InterPro" id="IPR002067">
    <property type="entry name" value="Mit_carrier"/>
</dbReference>
<dbReference type="InterPro" id="IPR050567">
    <property type="entry name" value="Mitochondrial_Carrier"/>
</dbReference>
<dbReference type="InterPro" id="IPR018108">
    <property type="entry name" value="Mitochondrial_sb/sol_carrier"/>
</dbReference>
<dbReference type="InterPro" id="IPR023395">
    <property type="entry name" value="Mt_carrier_dom_sf"/>
</dbReference>
<dbReference type="PANTHER" id="PTHR45624">
    <property type="entry name" value="MITOCHONDRIAL BASIC AMINO ACIDS TRANSPORTER-RELATED"/>
    <property type="match status" value="1"/>
</dbReference>
<dbReference type="PANTHER" id="PTHR45624:SF10">
    <property type="entry name" value="SLC (SOLUTE CARRIER) HOMOLOG"/>
    <property type="match status" value="1"/>
</dbReference>
<dbReference type="Pfam" id="PF00153">
    <property type="entry name" value="Mito_carr"/>
    <property type="match status" value="3"/>
</dbReference>
<dbReference type="PRINTS" id="PR00926">
    <property type="entry name" value="MITOCARRIER"/>
</dbReference>
<dbReference type="SUPFAM" id="SSF103506">
    <property type="entry name" value="Mitochondrial carrier"/>
    <property type="match status" value="1"/>
</dbReference>
<dbReference type="PROSITE" id="PS50920">
    <property type="entry name" value="SOLCAR"/>
    <property type="match status" value="3"/>
</dbReference>
<name>TPC1_NEOFI</name>
<reference key="1">
    <citation type="journal article" date="2008" name="PLoS Genet.">
        <title>Genomic islands in the pathogenic filamentous fungus Aspergillus fumigatus.</title>
        <authorList>
            <person name="Fedorova N.D."/>
            <person name="Khaldi N."/>
            <person name="Joardar V.S."/>
            <person name="Maiti R."/>
            <person name="Amedeo P."/>
            <person name="Anderson M.J."/>
            <person name="Crabtree J."/>
            <person name="Silva J.C."/>
            <person name="Badger J.H."/>
            <person name="Albarraq A."/>
            <person name="Angiuoli S."/>
            <person name="Bussey H."/>
            <person name="Bowyer P."/>
            <person name="Cotty P.J."/>
            <person name="Dyer P.S."/>
            <person name="Egan A."/>
            <person name="Galens K."/>
            <person name="Fraser-Liggett C.M."/>
            <person name="Haas B.J."/>
            <person name="Inman J.M."/>
            <person name="Kent R."/>
            <person name="Lemieux S."/>
            <person name="Malavazi I."/>
            <person name="Orvis J."/>
            <person name="Roemer T."/>
            <person name="Ronning C.M."/>
            <person name="Sundaram J.P."/>
            <person name="Sutton G."/>
            <person name="Turner G."/>
            <person name="Venter J.C."/>
            <person name="White O.R."/>
            <person name="Whitty B.R."/>
            <person name="Youngman P."/>
            <person name="Wolfe K.H."/>
            <person name="Goldman G.H."/>
            <person name="Wortman J.R."/>
            <person name="Jiang B."/>
            <person name="Denning D.W."/>
            <person name="Nierman W.C."/>
        </authorList>
    </citation>
    <scope>NUCLEOTIDE SEQUENCE [LARGE SCALE GENOMIC DNA]</scope>
    <source>
        <strain>ATCC 1020 / DSM 3700 / CBS 544.65 / FGSC A1164 / JCM 1740 / NRRL 181 / WB 181</strain>
    </source>
</reference>
<sequence>MSAGGEHLKDEGTRRQVVLSGGIAGLVSRFCVAPLDVVKIRLQLQIHSLSDPASHRDVVGPIYKGTLSTMRAIIKQEGITGLWKGNIPAELMYVCYGALQFTAYRTTTQVLAQLDPHRLPPALESFVSGAVAGGLATASTYPLDLLRTRFAAQGTERIYTSLLASVQDIARNEGPAGFFRGCSAAVGQIVPYMGLFFATYESLRPVLSGLENMPFGSGDAAAGVIASVLAKTGVFPLDLVRKRLQVQGPTRTLYVHRNIPEYRGVFSTIAMIVRTQGVRGLYRGLTVSLIKAAPASAITMWTYERSLKLLHDFRVAE</sequence>
<comment type="function">
    <text evidence="1">Mitochondrial transporter that mediates uptake of thiamine pyrophosphate (ThPP) into mitochondria.</text>
</comment>
<comment type="subcellular location">
    <subcellularLocation>
        <location evidence="1">Mitochondrion inner membrane</location>
        <topology evidence="1">Multi-pass membrane protein</topology>
    </subcellularLocation>
</comment>
<comment type="similarity">
    <text evidence="3">Belongs to the mitochondrial carrier (TC 2.A.29) family.</text>
</comment>
<evidence type="ECO:0000250" key="1"/>
<evidence type="ECO:0000255" key="2"/>
<evidence type="ECO:0000305" key="3"/>
<keyword id="KW-0472">Membrane</keyword>
<keyword id="KW-0496">Mitochondrion</keyword>
<keyword id="KW-0999">Mitochondrion inner membrane</keyword>
<keyword id="KW-1185">Reference proteome</keyword>
<keyword id="KW-0677">Repeat</keyword>
<keyword id="KW-0812">Transmembrane</keyword>
<keyword id="KW-1133">Transmembrane helix</keyword>
<keyword id="KW-0813">Transport</keyword>
<proteinExistence type="inferred from homology"/>
<feature type="chain" id="PRO_0000320469" description="Mitochondrial thiamine pyrophosphate carrier 1">
    <location>
        <begin position="1"/>
        <end position="317"/>
    </location>
</feature>
<feature type="transmembrane region" description="Helical; Name=1" evidence="2">
    <location>
        <begin position="17"/>
        <end position="35"/>
    </location>
</feature>
<feature type="transmembrane region" description="Helical; Name=2" evidence="2">
    <location>
        <begin position="91"/>
        <end position="107"/>
    </location>
</feature>
<feature type="transmembrane region" description="Helical; Name=3" evidence="2">
    <location>
        <begin position="126"/>
        <end position="146"/>
    </location>
</feature>
<feature type="transmembrane region" description="Helical; Name=4" evidence="2">
    <location>
        <begin position="181"/>
        <end position="198"/>
    </location>
</feature>
<feature type="transmembrane region" description="Helical; Name=5" evidence="2">
    <location>
        <begin position="220"/>
        <end position="240"/>
    </location>
</feature>
<feature type="transmembrane region" description="Helical; Name=6" evidence="2">
    <location>
        <begin position="284"/>
        <end position="301"/>
    </location>
</feature>
<feature type="repeat" description="Solcar 1">
    <location>
        <begin position="12"/>
        <end position="110"/>
    </location>
</feature>
<feature type="repeat" description="Solcar 2">
    <location>
        <begin position="120"/>
        <end position="206"/>
    </location>
</feature>
<feature type="repeat" description="Solcar 3">
    <location>
        <begin position="214"/>
        <end position="309"/>
    </location>
</feature>
<protein>
    <recommendedName>
        <fullName>Mitochondrial thiamine pyrophosphate carrier 1</fullName>
    </recommendedName>
</protein>
<organism>
    <name type="scientific">Neosartorya fischeri (strain ATCC 1020 / DSM 3700 / CBS 544.65 / FGSC A1164 / JCM 1740 / NRRL 181 / WB 181)</name>
    <name type="common">Aspergillus fischerianus</name>
    <dbReference type="NCBI Taxonomy" id="331117"/>
    <lineage>
        <taxon>Eukaryota</taxon>
        <taxon>Fungi</taxon>
        <taxon>Dikarya</taxon>
        <taxon>Ascomycota</taxon>
        <taxon>Pezizomycotina</taxon>
        <taxon>Eurotiomycetes</taxon>
        <taxon>Eurotiomycetidae</taxon>
        <taxon>Eurotiales</taxon>
        <taxon>Aspergillaceae</taxon>
        <taxon>Aspergillus</taxon>
        <taxon>Aspergillus subgen. Fumigati</taxon>
    </lineage>
</organism>